<evidence type="ECO:0000255" key="1">
    <source>
        <dbReference type="HAMAP-Rule" id="MF_01270"/>
    </source>
</evidence>
<gene>
    <name evidence="1" type="primary">anmK</name>
    <name type="ordered locus">YPTB2286</name>
</gene>
<protein>
    <recommendedName>
        <fullName evidence="1">Anhydro-N-acetylmuramic acid kinase</fullName>
        <ecNumber evidence="1">2.7.1.170</ecNumber>
    </recommendedName>
    <alternativeName>
        <fullName evidence="1">AnhMurNAc kinase</fullName>
    </alternativeName>
</protein>
<name>ANMK_YERPS</name>
<reference key="1">
    <citation type="journal article" date="2004" name="Proc. Natl. Acad. Sci. U.S.A.">
        <title>Insights into the evolution of Yersinia pestis through whole-genome comparison with Yersinia pseudotuberculosis.</title>
        <authorList>
            <person name="Chain P.S.G."/>
            <person name="Carniel E."/>
            <person name="Larimer F.W."/>
            <person name="Lamerdin J."/>
            <person name="Stoutland P.O."/>
            <person name="Regala W.M."/>
            <person name="Georgescu A.M."/>
            <person name="Vergez L.M."/>
            <person name="Land M.L."/>
            <person name="Motin V.L."/>
            <person name="Brubaker R.R."/>
            <person name="Fowler J."/>
            <person name="Hinnebusch J."/>
            <person name="Marceau M."/>
            <person name="Medigue C."/>
            <person name="Simonet M."/>
            <person name="Chenal-Francisque V."/>
            <person name="Souza B."/>
            <person name="Dacheux D."/>
            <person name="Elliott J.M."/>
            <person name="Derbise A."/>
            <person name="Hauser L.J."/>
            <person name="Garcia E."/>
        </authorList>
    </citation>
    <scope>NUCLEOTIDE SEQUENCE [LARGE SCALE GENOMIC DNA]</scope>
    <source>
        <strain>IP32953</strain>
    </source>
</reference>
<accession>Q66A46</accession>
<feature type="chain" id="PRO_0000250092" description="Anhydro-N-acetylmuramic acid kinase">
    <location>
        <begin position="1"/>
        <end position="370"/>
    </location>
</feature>
<feature type="binding site" evidence="1">
    <location>
        <begin position="12"/>
        <end position="19"/>
    </location>
    <ligand>
        <name>ATP</name>
        <dbReference type="ChEBI" id="CHEBI:30616"/>
    </ligand>
</feature>
<proteinExistence type="inferred from homology"/>
<dbReference type="EC" id="2.7.1.170" evidence="1"/>
<dbReference type="EMBL" id="BX936398">
    <property type="protein sequence ID" value="CAH21524.1"/>
    <property type="molecule type" value="Genomic_DNA"/>
</dbReference>
<dbReference type="RefSeq" id="WP_002218322.1">
    <property type="nucleotide sequence ID" value="NZ_CP009712.1"/>
</dbReference>
<dbReference type="SMR" id="Q66A46"/>
<dbReference type="GeneID" id="57976303"/>
<dbReference type="KEGG" id="ypo:BZ17_174"/>
<dbReference type="KEGG" id="yps:YPTB2286"/>
<dbReference type="PATRIC" id="fig|273123.14.peg.181"/>
<dbReference type="UniPathway" id="UPA00343"/>
<dbReference type="UniPathway" id="UPA00544"/>
<dbReference type="Proteomes" id="UP000001011">
    <property type="component" value="Chromosome"/>
</dbReference>
<dbReference type="GO" id="GO:0005524">
    <property type="term" value="F:ATP binding"/>
    <property type="evidence" value="ECO:0007669"/>
    <property type="project" value="UniProtKB-UniRule"/>
</dbReference>
<dbReference type="GO" id="GO:0016301">
    <property type="term" value="F:kinase activity"/>
    <property type="evidence" value="ECO:0007669"/>
    <property type="project" value="UniProtKB-KW"/>
</dbReference>
<dbReference type="GO" id="GO:0016773">
    <property type="term" value="F:phosphotransferase activity, alcohol group as acceptor"/>
    <property type="evidence" value="ECO:0007669"/>
    <property type="project" value="UniProtKB-UniRule"/>
</dbReference>
<dbReference type="GO" id="GO:0097175">
    <property type="term" value="P:1,6-anhydro-N-acetyl-beta-muramic acid catabolic process"/>
    <property type="evidence" value="ECO:0007669"/>
    <property type="project" value="UniProtKB-UniRule"/>
</dbReference>
<dbReference type="GO" id="GO:0006040">
    <property type="term" value="P:amino sugar metabolic process"/>
    <property type="evidence" value="ECO:0007669"/>
    <property type="project" value="InterPro"/>
</dbReference>
<dbReference type="GO" id="GO:0009254">
    <property type="term" value="P:peptidoglycan turnover"/>
    <property type="evidence" value="ECO:0007669"/>
    <property type="project" value="UniProtKB-UniRule"/>
</dbReference>
<dbReference type="CDD" id="cd24050">
    <property type="entry name" value="ASKHA_NBD_ANMK"/>
    <property type="match status" value="1"/>
</dbReference>
<dbReference type="Gene3D" id="3.30.420.40">
    <property type="match status" value="2"/>
</dbReference>
<dbReference type="HAMAP" id="MF_01270">
    <property type="entry name" value="AnhMurNAc_kinase"/>
    <property type="match status" value="1"/>
</dbReference>
<dbReference type="InterPro" id="IPR005338">
    <property type="entry name" value="Anhydro_N_Ac-Mur_kinase"/>
</dbReference>
<dbReference type="InterPro" id="IPR043129">
    <property type="entry name" value="ATPase_NBD"/>
</dbReference>
<dbReference type="NCBIfam" id="NF007138">
    <property type="entry name" value="PRK09585.1-1"/>
    <property type="match status" value="1"/>
</dbReference>
<dbReference type="NCBIfam" id="NF007139">
    <property type="entry name" value="PRK09585.1-3"/>
    <property type="match status" value="1"/>
</dbReference>
<dbReference type="NCBIfam" id="NF007148">
    <property type="entry name" value="PRK09585.3-2"/>
    <property type="match status" value="1"/>
</dbReference>
<dbReference type="PANTHER" id="PTHR30605">
    <property type="entry name" value="ANHYDRO-N-ACETYLMURAMIC ACID KINASE"/>
    <property type="match status" value="1"/>
</dbReference>
<dbReference type="PANTHER" id="PTHR30605:SF0">
    <property type="entry name" value="ANHYDRO-N-ACETYLMURAMIC ACID KINASE"/>
    <property type="match status" value="1"/>
</dbReference>
<dbReference type="Pfam" id="PF03702">
    <property type="entry name" value="AnmK"/>
    <property type="match status" value="1"/>
</dbReference>
<dbReference type="SUPFAM" id="SSF53067">
    <property type="entry name" value="Actin-like ATPase domain"/>
    <property type="match status" value="1"/>
</dbReference>
<organism>
    <name type="scientific">Yersinia pseudotuberculosis serotype I (strain IP32953)</name>
    <dbReference type="NCBI Taxonomy" id="273123"/>
    <lineage>
        <taxon>Bacteria</taxon>
        <taxon>Pseudomonadati</taxon>
        <taxon>Pseudomonadota</taxon>
        <taxon>Gammaproteobacteria</taxon>
        <taxon>Enterobacterales</taxon>
        <taxon>Yersiniaceae</taxon>
        <taxon>Yersinia</taxon>
    </lineage>
</organism>
<comment type="function">
    <text evidence="1">Catalyzes the specific phosphorylation of 1,6-anhydro-N-acetylmuramic acid (anhMurNAc) with the simultaneous cleavage of the 1,6-anhydro ring, generating MurNAc-6-P. Is required for the utilization of anhMurNAc either imported from the medium or derived from its own cell wall murein, and thus plays a role in cell wall recycling.</text>
</comment>
<comment type="catalytic activity">
    <reaction evidence="1">
        <text>1,6-anhydro-N-acetyl-beta-muramate + ATP + H2O = N-acetyl-D-muramate 6-phosphate + ADP + H(+)</text>
        <dbReference type="Rhea" id="RHEA:24952"/>
        <dbReference type="ChEBI" id="CHEBI:15377"/>
        <dbReference type="ChEBI" id="CHEBI:15378"/>
        <dbReference type="ChEBI" id="CHEBI:30616"/>
        <dbReference type="ChEBI" id="CHEBI:58690"/>
        <dbReference type="ChEBI" id="CHEBI:58722"/>
        <dbReference type="ChEBI" id="CHEBI:456216"/>
        <dbReference type="EC" id="2.7.1.170"/>
    </reaction>
</comment>
<comment type="pathway">
    <text evidence="1">Amino-sugar metabolism; 1,6-anhydro-N-acetylmuramate degradation.</text>
</comment>
<comment type="pathway">
    <text evidence="1">Cell wall biogenesis; peptidoglycan recycling.</text>
</comment>
<comment type="similarity">
    <text evidence="1">Belongs to the anhydro-N-acetylmuramic acid kinase family.</text>
</comment>
<sequence length="370" mass="39492">MKSGRFIGVMSGTSLDGVDVVLAAIDERMVAQQASYTHPIPLQLKKDILGMCQGQSTTLSAVGKLDAQLGILFAEAVLALLAKEGLSAQDITAIGCHGQTVWHEPLGEPAFTMQLGDNNRIAAMTQIATVGDFRRRDMAYGGQGAPLVPAFHHALLAHATEKRMVLNIGGIANLSVLLPDSPIRGFDTGPGNMLMDAWIWRNCSLPYDKDACWALSGHVNQPLLEQMFNDPYFRLPAPKSTGREYFNAAWLDKQLARIPGVTAEDIQATLAELTAVSITEQVRLAGGCDRLLVCGGGARNPLVMARISALLSGTEVCTTDDAGIRGDDMEALAFAWLAFRTLSGKPGNLPSVTGASRETILGAVHPVSSW</sequence>
<keyword id="KW-0067">ATP-binding</keyword>
<keyword id="KW-0119">Carbohydrate metabolism</keyword>
<keyword id="KW-0418">Kinase</keyword>
<keyword id="KW-0547">Nucleotide-binding</keyword>
<keyword id="KW-0808">Transferase</keyword>